<feature type="chain" id="PRO_1000044948" description="N(4)-acetylcytidine amidohydrolase">
    <location>
        <begin position="1"/>
        <end position="104"/>
    </location>
</feature>
<feature type="domain" description="ASCH" evidence="1">
    <location>
        <begin position="6"/>
        <end position="102"/>
    </location>
</feature>
<feature type="active site" description="Proton acceptor" evidence="2">
    <location>
        <position position="20"/>
    </location>
</feature>
<feature type="active site" description="Nucleophile" evidence="2">
    <location>
        <position position="23"/>
    </location>
</feature>
<feature type="active site" description="Proton donor" evidence="2">
    <location>
        <position position="73"/>
    </location>
</feature>
<accession>A7MR71</accession>
<proteinExistence type="inferred from homology"/>
<organism>
    <name type="scientific">Cronobacter sakazakii (strain ATCC BAA-894)</name>
    <name type="common">Enterobacter sakazakii</name>
    <dbReference type="NCBI Taxonomy" id="290339"/>
    <lineage>
        <taxon>Bacteria</taxon>
        <taxon>Pseudomonadati</taxon>
        <taxon>Pseudomonadota</taxon>
        <taxon>Gammaproteobacteria</taxon>
        <taxon>Enterobacterales</taxon>
        <taxon>Enterobacteriaceae</taxon>
        <taxon>Cronobacter</taxon>
    </lineage>
</organism>
<dbReference type="EC" id="3.5.1.135" evidence="2"/>
<dbReference type="EMBL" id="CP000783">
    <property type="protein sequence ID" value="ABU75728.1"/>
    <property type="molecule type" value="Genomic_DNA"/>
</dbReference>
<dbReference type="SMR" id="A7MR71"/>
<dbReference type="KEGG" id="esa:ESA_00431"/>
<dbReference type="PATRIC" id="fig|290339.8.peg.393"/>
<dbReference type="HOGENOM" id="CLU_152586_0_0_6"/>
<dbReference type="Proteomes" id="UP000000260">
    <property type="component" value="Chromosome"/>
</dbReference>
<dbReference type="GO" id="GO:0005829">
    <property type="term" value="C:cytosol"/>
    <property type="evidence" value="ECO:0007669"/>
    <property type="project" value="TreeGrafter"/>
</dbReference>
<dbReference type="GO" id="GO:0016813">
    <property type="term" value="F:hydrolase activity, acting on carbon-nitrogen (but not peptide) bonds, in linear amidines"/>
    <property type="evidence" value="ECO:0007669"/>
    <property type="project" value="UniProtKB-UniRule"/>
</dbReference>
<dbReference type="GO" id="GO:0106251">
    <property type="term" value="F:N4-acetylcytidine amidohydrolase activity"/>
    <property type="evidence" value="ECO:0007669"/>
    <property type="project" value="RHEA"/>
</dbReference>
<dbReference type="CDD" id="cd06552">
    <property type="entry name" value="ASCH_yqfb_like"/>
    <property type="match status" value="1"/>
</dbReference>
<dbReference type="FunFam" id="2.30.130.30:FF:000001">
    <property type="entry name" value="UPF0267 protein YqfB"/>
    <property type="match status" value="1"/>
</dbReference>
<dbReference type="Gene3D" id="2.30.130.30">
    <property type="entry name" value="Hypothetical protein"/>
    <property type="match status" value="1"/>
</dbReference>
<dbReference type="HAMAP" id="MF_00684">
    <property type="entry name" value="ac4C_amidohydr"/>
    <property type="match status" value="1"/>
</dbReference>
<dbReference type="InterPro" id="IPR008314">
    <property type="entry name" value="AC4CH"/>
</dbReference>
<dbReference type="InterPro" id="IPR007374">
    <property type="entry name" value="ASCH_domain"/>
</dbReference>
<dbReference type="InterPro" id="IPR015947">
    <property type="entry name" value="PUA-like_sf"/>
</dbReference>
<dbReference type="NCBIfam" id="NF003443">
    <property type="entry name" value="PRK04980.1"/>
    <property type="match status" value="1"/>
</dbReference>
<dbReference type="PANTHER" id="PTHR38088">
    <property type="entry name" value="UCP029143 FAMILY PROTEIN"/>
    <property type="match status" value="1"/>
</dbReference>
<dbReference type="PANTHER" id="PTHR38088:SF2">
    <property type="entry name" value="UCP029143 FAMILY PROTEIN"/>
    <property type="match status" value="1"/>
</dbReference>
<dbReference type="Pfam" id="PF04266">
    <property type="entry name" value="ASCH"/>
    <property type="match status" value="1"/>
</dbReference>
<dbReference type="PIRSF" id="PIRSF029143">
    <property type="entry name" value="UCP029143"/>
    <property type="match status" value="1"/>
</dbReference>
<dbReference type="SMART" id="SM01022">
    <property type="entry name" value="ASCH"/>
    <property type="match status" value="1"/>
</dbReference>
<dbReference type="SUPFAM" id="SSF88697">
    <property type="entry name" value="PUA domain-like"/>
    <property type="match status" value="1"/>
</dbReference>
<gene>
    <name type="ordered locus">ESA_00431</name>
</gene>
<name>AC4CH_CROS8</name>
<protein>
    <recommendedName>
        <fullName evidence="2">N(4)-acetylcytidine amidohydrolase</fullName>
        <shortName evidence="2">ac4C amidohydrolase</shortName>
        <ecNumber evidence="2">3.5.1.135</ecNumber>
    </recommendedName>
</protein>
<keyword id="KW-0378">Hydrolase</keyword>
<keyword id="KW-1185">Reference proteome</keyword>
<evidence type="ECO:0000255" key="1"/>
<evidence type="ECO:0000255" key="2">
    <source>
        <dbReference type="HAMAP-Rule" id="MF_00684"/>
    </source>
</evidence>
<comment type="function">
    <text evidence="2">Catalyzes the hydrolysis of N(4)-acetylcytidine (ac4C).</text>
</comment>
<comment type="catalytic activity">
    <reaction evidence="2">
        <text>N(4)-acetylcytidine + H2O = cytidine + acetate + H(+)</text>
        <dbReference type="Rhea" id="RHEA:62932"/>
        <dbReference type="ChEBI" id="CHEBI:15377"/>
        <dbReference type="ChEBI" id="CHEBI:15378"/>
        <dbReference type="ChEBI" id="CHEBI:17562"/>
        <dbReference type="ChEBI" id="CHEBI:30089"/>
        <dbReference type="ChEBI" id="CHEBI:70989"/>
        <dbReference type="EC" id="3.5.1.135"/>
    </reaction>
</comment>
<comment type="catalytic activity">
    <reaction evidence="2">
        <text>N(4)-acetyl-2'-deoxycytidine + H2O = 2'-deoxycytidine + acetate + H(+)</text>
        <dbReference type="Rhea" id="RHEA:62936"/>
        <dbReference type="ChEBI" id="CHEBI:15377"/>
        <dbReference type="ChEBI" id="CHEBI:15378"/>
        <dbReference type="ChEBI" id="CHEBI:15698"/>
        <dbReference type="ChEBI" id="CHEBI:30089"/>
        <dbReference type="ChEBI" id="CHEBI:146133"/>
        <dbReference type="EC" id="3.5.1.135"/>
    </reaction>
</comment>
<comment type="catalytic activity">
    <reaction evidence="2">
        <text>N(4)-acetylcytosine + H2O = cytosine + acetate + H(+)</text>
        <dbReference type="Rhea" id="RHEA:62940"/>
        <dbReference type="ChEBI" id="CHEBI:15377"/>
        <dbReference type="ChEBI" id="CHEBI:15378"/>
        <dbReference type="ChEBI" id="CHEBI:16040"/>
        <dbReference type="ChEBI" id="CHEBI:30089"/>
        <dbReference type="ChEBI" id="CHEBI:146134"/>
        <dbReference type="EC" id="3.5.1.135"/>
    </reaction>
</comment>
<comment type="similarity">
    <text evidence="2">Belongs to the N(4)-acetylcytidine amidohydrolase family.</text>
</comment>
<reference key="1">
    <citation type="journal article" date="2010" name="PLoS ONE">
        <title>Genome sequence of Cronobacter sakazakii BAA-894 and comparative genomic hybridization analysis with other Cronobacter species.</title>
        <authorList>
            <person name="Kucerova E."/>
            <person name="Clifton S.W."/>
            <person name="Xia X.Q."/>
            <person name="Long F."/>
            <person name="Porwollik S."/>
            <person name="Fulton L."/>
            <person name="Fronick C."/>
            <person name="Minx P."/>
            <person name="Kyung K."/>
            <person name="Warren W."/>
            <person name="Fulton R."/>
            <person name="Feng D."/>
            <person name="Wollam A."/>
            <person name="Shah N."/>
            <person name="Bhonagiri V."/>
            <person name="Nash W.E."/>
            <person name="Hallsworth-Pepin K."/>
            <person name="Wilson R.K."/>
            <person name="McClelland M."/>
            <person name="Forsythe S.J."/>
        </authorList>
    </citation>
    <scope>NUCLEOTIDE SEQUENCE [LARGE SCALE GENOMIC DNA]</scope>
    <source>
        <strain>ATCC BAA-894</strain>
    </source>
</reference>
<sequence>MKNDITFYTRFQQDILAGTKTITIRDESEAHFMPGQRLRTGRYEDNGYFCTLEVLRVTPVTLAQLNEEHARQENMTLAELKKVIADIYPGINELYVIAFKKVEG</sequence>